<name>RFA3_SCHPO</name>
<gene>
    <name type="primary">ssb3</name>
    <name type="ORF">SPCC23B6.05c</name>
</gene>
<protein>
    <recommendedName>
        <fullName>Replication factor A protein 3</fullName>
    </recommendedName>
    <alternativeName>
        <fullName>Single-stranded DNA-binding protein P12 subunit</fullName>
    </alternativeName>
</protein>
<proteinExistence type="evidence at protein level"/>
<sequence length="104" mass="11793">MERPTPRVTKDMLPECSGKTVRIVGKANQVEGETAKVDSNGSFDMHLTVDNTLEPNHFYEFVVSVKPDSSVQLLTCVDFGTDIDMEVYQKLVLFSHKYNSLFFE</sequence>
<dbReference type="EMBL" id="U59387">
    <property type="protein sequence ID" value="AAC49439.1"/>
    <property type="molecule type" value="Genomic_DNA"/>
</dbReference>
<dbReference type="EMBL" id="CU329672">
    <property type="protein sequence ID" value="CAB51564.1"/>
    <property type="molecule type" value="Genomic_DNA"/>
</dbReference>
<dbReference type="PIR" id="T41245">
    <property type="entry name" value="T41245"/>
</dbReference>
<dbReference type="RefSeq" id="NP_588128.1">
    <property type="nucleotide sequence ID" value="NM_001023118.2"/>
</dbReference>
<dbReference type="SMR" id="Q92374"/>
<dbReference type="BioGRID" id="275357">
    <property type="interactions" value="70"/>
</dbReference>
<dbReference type="DIP" id="DIP-29239N"/>
<dbReference type="FunCoup" id="Q92374">
    <property type="interactions" value="89"/>
</dbReference>
<dbReference type="IntAct" id="Q92374">
    <property type="interactions" value="1"/>
</dbReference>
<dbReference type="STRING" id="284812.Q92374"/>
<dbReference type="iPTMnet" id="Q92374"/>
<dbReference type="PaxDb" id="4896-SPCC23B6.05c.1"/>
<dbReference type="EnsemblFungi" id="SPCC23B6.05c.1">
    <property type="protein sequence ID" value="SPCC23B6.05c.1:pep"/>
    <property type="gene ID" value="SPCC23B6.05c"/>
</dbReference>
<dbReference type="GeneID" id="2538775"/>
<dbReference type="KEGG" id="spo:2538775"/>
<dbReference type="PomBase" id="SPCC23B6.05c">
    <property type="gene designation" value="ssb3"/>
</dbReference>
<dbReference type="VEuPathDB" id="FungiDB:SPCC23B6.05c"/>
<dbReference type="eggNOG" id="ENOG502SBIR">
    <property type="taxonomic scope" value="Eukaryota"/>
</dbReference>
<dbReference type="HOGENOM" id="CLU_141922_2_1_1"/>
<dbReference type="InParanoid" id="Q92374"/>
<dbReference type="OMA" id="HRYKEIF"/>
<dbReference type="PhylomeDB" id="Q92374"/>
<dbReference type="Reactome" id="R-SPO-110312">
    <property type="pathway name" value="Translesion synthesis by REV1"/>
</dbReference>
<dbReference type="Reactome" id="R-SPO-110314">
    <property type="pathway name" value="Recognition of DNA damage by PCNA-containing replication complex"/>
</dbReference>
<dbReference type="Reactome" id="R-SPO-110320">
    <property type="pathway name" value="Translesion Synthesis by POLH"/>
</dbReference>
<dbReference type="Reactome" id="R-SPO-174437">
    <property type="pathway name" value="Removal of the Flap Intermediate from the C-strand"/>
</dbReference>
<dbReference type="Reactome" id="R-SPO-176187">
    <property type="pathway name" value="Activation of ATR in response to replication stress"/>
</dbReference>
<dbReference type="Reactome" id="R-SPO-3371453">
    <property type="pathway name" value="Regulation of HSF1-mediated heat shock response"/>
</dbReference>
<dbReference type="Reactome" id="R-SPO-5358565">
    <property type="pathway name" value="Mismatch repair (MMR) directed by MSH2:MSH6 (MutSalpha)"/>
</dbReference>
<dbReference type="Reactome" id="R-SPO-5358606">
    <property type="pathway name" value="Mismatch repair (MMR) directed by MSH2:MSH3 (MutSbeta)"/>
</dbReference>
<dbReference type="Reactome" id="R-SPO-5651801">
    <property type="pathway name" value="PCNA-Dependent Long Patch Base Excision Repair"/>
</dbReference>
<dbReference type="Reactome" id="R-SPO-5655862">
    <property type="pathway name" value="Translesion synthesis by POLK"/>
</dbReference>
<dbReference type="Reactome" id="R-SPO-5656121">
    <property type="pathway name" value="Translesion synthesis by POLI"/>
</dbReference>
<dbReference type="Reactome" id="R-SPO-5656169">
    <property type="pathway name" value="Termination of translesion DNA synthesis"/>
</dbReference>
<dbReference type="Reactome" id="R-SPO-5696395">
    <property type="pathway name" value="Formation of Incision Complex in GG-NER"/>
</dbReference>
<dbReference type="Reactome" id="R-SPO-5696397">
    <property type="pathway name" value="Gap-filling DNA repair synthesis and ligation in GG-NER"/>
</dbReference>
<dbReference type="Reactome" id="R-SPO-5696400">
    <property type="pathway name" value="Dual Incision in GG-NER"/>
</dbReference>
<dbReference type="Reactome" id="R-SPO-6782135">
    <property type="pathway name" value="Dual incision in TC-NER"/>
</dbReference>
<dbReference type="Reactome" id="R-SPO-6782210">
    <property type="pathway name" value="Gap-filling DNA repair synthesis and ligation in TC-NER"/>
</dbReference>
<dbReference type="Reactome" id="R-SPO-68962">
    <property type="pathway name" value="Activation of the pre-replicative complex"/>
</dbReference>
<dbReference type="Reactome" id="R-SPO-69166">
    <property type="pathway name" value="Removal of the Flap Intermediate"/>
</dbReference>
<dbReference type="PRO" id="PR:Q92374"/>
<dbReference type="Proteomes" id="UP000002485">
    <property type="component" value="Chromosome III"/>
</dbReference>
<dbReference type="GO" id="GO:0140445">
    <property type="term" value="C:chromosome, telomeric repeat region"/>
    <property type="evidence" value="ECO:0000266"/>
    <property type="project" value="PomBase"/>
</dbReference>
<dbReference type="GO" id="GO:0005829">
    <property type="term" value="C:cytosol"/>
    <property type="evidence" value="ECO:0007005"/>
    <property type="project" value="PomBase"/>
</dbReference>
<dbReference type="GO" id="GO:0005662">
    <property type="term" value="C:DNA replication factor A complex"/>
    <property type="evidence" value="ECO:0000314"/>
    <property type="project" value="PomBase"/>
</dbReference>
<dbReference type="GO" id="GO:0005634">
    <property type="term" value="C:nucleus"/>
    <property type="evidence" value="ECO:0007005"/>
    <property type="project" value="PomBase"/>
</dbReference>
<dbReference type="GO" id="GO:0035861">
    <property type="term" value="C:site of double-strand break"/>
    <property type="evidence" value="ECO:0000314"/>
    <property type="project" value="PomBase"/>
</dbReference>
<dbReference type="GO" id="GO:0003684">
    <property type="term" value="F:damaged DNA binding"/>
    <property type="evidence" value="ECO:0000318"/>
    <property type="project" value="GO_Central"/>
</dbReference>
<dbReference type="GO" id="GO:0006284">
    <property type="term" value="P:base-excision repair"/>
    <property type="evidence" value="ECO:0000318"/>
    <property type="project" value="GO_Central"/>
</dbReference>
<dbReference type="GO" id="GO:0006260">
    <property type="term" value="P:DNA replication"/>
    <property type="evidence" value="ECO:0000318"/>
    <property type="project" value="GO_Central"/>
</dbReference>
<dbReference type="GO" id="GO:0006269">
    <property type="term" value="P:DNA replication, synthesis of primer"/>
    <property type="evidence" value="ECO:0000266"/>
    <property type="project" value="PomBase"/>
</dbReference>
<dbReference type="GO" id="GO:0000724">
    <property type="term" value="P:double-strand break repair via homologous recombination"/>
    <property type="evidence" value="ECO:0000318"/>
    <property type="project" value="GO_Central"/>
</dbReference>
<dbReference type="GO" id="GO:0006298">
    <property type="term" value="P:mismatch repair"/>
    <property type="evidence" value="ECO:0000318"/>
    <property type="project" value="GO_Central"/>
</dbReference>
<dbReference type="GO" id="GO:0033260">
    <property type="term" value="P:nuclear DNA replication"/>
    <property type="evidence" value="ECO:0000266"/>
    <property type="project" value="PomBase"/>
</dbReference>
<dbReference type="GO" id="GO:0006289">
    <property type="term" value="P:nucleotide-excision repair"/>
    <property type="evidence" value="ECO:0000318"/>
    <property type="project" value="GO_Central"/>
</dbReference>
<dbReference type="GO" id="GO:0000723">
    <property type="term" value="P:telomere maintenance"/>
    <property type="evidence" value="ECO:0000303"/>
    <property type="project" value="PomBase"/>
</dbReference>
<dbReference type="CDD" id="cd04479">
    <property type="entry name" value="RPA3"/>
    <property type="match status" value="1"/>
</dbReference>
<dbReference type="FunFam" id="2.40.50.140:FF:000271">
    <property type="entry name" value="Similar to ssDNA binding protein Ssb3"/>
    <property type="match status" value="1"/>
</dbReference>
<dbReference type="Gene3D" id="2.40.50.140">
    <property type="entry name" value="Nucleic acid-binding proteins"/>
    <property type="match status" value="1"/>
</dbReference>
<dbReference type="InterPro" id="IPR012340">
    <property type="entry name" value="NA-bd_OB-fold"/>
</dbReference>
<dbReference type="InterPro" id="IPR013970">
    <property type="entry name" value="Rfa2"/>
</dbReference>
<dbReference type="PANTHER" id="PTHR15114:SF1">
    <property type="entry name" value="REPLICATION PROTEIN A 14 KDA SUBUNIT"/>
    <property type="match status" value="1"/>
</dbReference>
<dbReference type="PANTHER" id="PTHR15114">
    <property type="entry name" value="REPLICATION PROTEIN A3"/>
    <property type="match status" value="1"/>
</dbReference>
<dbReference type="Pfam" id="PF08661">
    <property type="entry name" value="Rep_fac-A_3"/>
    <property type="match status" value="1"/>
</dbReference>
<dbReference type="SUPFAM" id="SSF50249">
    <property type="entry name" value="Nucleic acid-binding proteins"/>
    <property type="match status" value="1"/>
</dbReference>
<evidence type="ECO:0000250" key="1"/>
<evidence type="ECO:0000250" key="2">
    <source>
        <dbReference type="UniProtKB" id="P35244"/>
    </source>
</evidence>
<evidence type="ECO:0000305" key="3"/>
<comment type="function">
    <text evidence="2">As part of the replication protein A (RPA/RP-A), a single-stranded DNA-binding heterotrimeric complex, may play an essential role in DNA replication, recombination and repair. Binds and stabilizes single-stranded DNA intermediates, preventing complementary DNA reannealing and recruiting different proteins involved in DNA metabolism.</text>
</comment>
<comment type="subunit">
    <text evidence="1">Component of the heterotrimeric canonical replication protein A complex (RPA).</text>
</comment>
<comment type="subcellular location">
    <subcellularLocation>
        <location>Nucleus</location>
    </subcellularLocation>
</comment>
<comment type="similarity">
    <text evidence="3">Belongs to the replication factor A protein 3 family.</text>
</comment>
<feature type="chain" id="PRO_0000097278" description="Replication factor A protein 3">
    <location>
        <begin position="1"/>
        <end position="104"/>
    </location>
</feature>
<reference key="1">
    <citation type="journal article" date="1996" name="J. Biol. Chem.">
        <title>Purification, gene cloning, and reconstitution of the heterotrimeric single-stranded DNA-binding protein from Schizosaccharomyces pombe.</title>
        <authorList>
            <person name="Ishiai M."/>
            <person name="Sanchez J.P."/>
            <person name="Amin A.A."/>
            <person name="Murakami Y."/>
            <person name="Hurwitz J."/>
        </authorList>
    </citation>
    <scope>NUCLEOTIDE SEQUENCE [GENOMIC DNA]</scope>
    <scope>PARTIAL PROTEIN SEQUENCE</scope>
    <source>
        <strain>972 / ATCC 24843</strain>
    </source>
</reference>
<reference key="2">
    <citation type="journal article" date="2002" name="Nature">
        <title>The genome sequence of Schizosaccharomyces pombe.</title>
        <authorList>
            <person name="Wood V."/>
            <person name="Gwilliam R."/>
            <person name="Rajandream M.A."/>
            <person name="Lyne M.H."/>
            <person name="Lyne R."/>
            <person name="Stewart A."/>
            <person name="Sgouros J.G."/>
            <person name="Peat N."/>
            <person name="Hayles J."/>
            <person name="Baker S.G."/>
            <person name="Basham D."/>
            <person name="Bowman S."/>
            <person name="Brooks K."/>
            <person name="Brown D."/>
            <person name="Brown S."/>
            <person name="Chillingworth T."/>
            <person name="Churcher C.M."/>
            <person name="Collins M."/>
            <person name="Connor R."/>
            <person name="Cronin A."/>
            <person name="Davis P."/>
            <person name="Feltwell T."/>
            <person name="Fraser A."/>
            <person name="Gentles S."/>
            <person name="Goble A."/>
            <person name="Hamlin N."/>
            <person name="Harris D.E."/>
            <person name="Hidalgo J."/>
            <person name="Hodgson G."/>
            <person name="Holroyd S."/>
            <person name="Hornsby T."/>
            <person name="Howarth S."/>
            <person name="Huckle E.J."/>
            <person name="Hunt S."/>
            <person name="Jagels K."/>
            <person name="James K.D."/>
            <person name="Jones L."/>
            <person name="Jones M."/>
            <person name="Leather S."/>
            <person name="McDonald S."/>
            <person name="McLean J."/>
            <person name="Mooney P."/>
            <person name="Moule S."/>
            <person name="Mungall K.L."/>
            <person name="Murphy L.D."/>
            <person name="Niblett D."/>
            <person name="Odell C."/>
            <person name="Oliver K."/>
            <person name="O'Neil S."/>
            <person name="Pearson D."/>
            <person name="Quail M.A."/>
            <person name="Rabbinowitsch E."/>
            <person name="Rutherford K.M."/>
            <person name="Rutter S."/>
            <person name="Saunders D."/>
            <person name="Seeger K."/>
            <person name="Sharp S."/>
            <person name="Skelton J."/>
            <person name="Simmonds M.N."/>
            <person name="Squares R."/>
            <person name="Squares S."/>
            <person name="Stevens K."/>
            <person name="Taylor K."/>
            <person name="Taylor R.G."/>
            <person name="Tivey A."/>
            <person name="Walsh S.V."/>
            <person name="Warren T."/>
            <person name="Whitehead S."/>
            <person name="Woodward J.R."/>
            <person name="Volckaert G."/>
            <person name="Aert R."/>
            <person name="Robben J."/>
            <person name="Grymonprez B."/>
            <person name="Weltjens I."/>
            <person name="Vanstreels E."/>
            <person name="Rieger M."/>
            <person name="Schaefer M."/>
            <person name="Mueller-Auer S."/>
            <person name="Gabel C."/>
            <person name="Fuchs M."/>
            <person name="Duesterhoeft A."/>
            <person name="Fritzc C."/>
            <person name="Holzer E."/>
            <person name="Moestl D."/>
            <person name="Hilbert H."/>
            <person name="Borzym K."/>
            <person name="Langer I."/>
            <person name="Beck A."/>
            <person name="Lehrach H."/>
            <person name="Reinhardt R."/>
            <person name="Pohl T.M."/>
            <person name="Eger P."/>
            <person name="Zimmermann W."/>
            <person name="Wedler H."/>
            <person name="Wambutt R."/>
            <person name="Purnelle B."/>
            <person name="Goffeau A."/>
            <person name="Cadieu E."/>
            <person name="Dreano S."/>
            <person name="Gloux S."/>
            <person name="Lelaure V."/>
            <person name="Mottier S."/>
            <person name="Galibert F."/>
            <person name="Aves S.J."/>
            <person name="Xiang Z."/>
            <person name="Hunt C."/>
            <person name="Moore K."/>
            <person name="Hurst S.M."/>
            <person name="Lucas M."/>
            <person name="Rochet M."/>
            <person name="Gaillardin C."/>
            <person name="Tallada V.A."/>
            <person name="Garzon A."/>
            <person name="Thode G."/>
            <person name="Daga R.R."/>
            <person name="Cruzado L."/>
            <person name="Jimenez J."/>
            <person name="Sanchez M."/>
            <person name="del Rey F."/>
            <person name="Benito J."/>
            <person name="Dominguez A."/>
            <person name="Revuelta J.L."/>
            <person name="Moreno S."/>
            <person name="Armstrong J."/>
            <person name="Forsburg S.L."/>
            <person name="Cerutti L."/>
            <person name="Lowe T."/>
            <person name="McCombie W.R."/>
            <person name="Paulsen I."/>
            <person name="Potashkin J."/>
            <person name="Shpakovski G.V."/>
            <person name="Ussery D."/>
            <person name="Barrell B.G."/>
            <person name="Nurse P."/>
        </authorList>
    </citation>
    <scope>NUCLEOTIDE SEQUENCE [LARGE SCALE GENOMIC DNA]</scope>
    <source>
        <strain>972 / ATCC 24843</strain>
    </source>
</reference>
<organism>
    <name type="scientific">Schizosaccharomyces pombe (strain 972 / ATCC 24843)</name>
    <name type="common">Fission yeast</name>
    <dbReference type="NCBI Taxonomy" id="284812"/>
    <lineage>
        <taxon>Eukaryota</taxon>
        <taxon>Fungi</taxon>
        <taxon>Dikarya</taxon>
        <taxon>Ascomycota</taxon>
        <taxon>Taphrinomycotina</taxon>
        <taxon>Schizosaccharomycetes</taxon>
        <taxon>Schizosaccharomycetales</taxon>
        <taxon>Schizosaccharomycetaceae</taxon>
        <taxon>Schizosaccharomyces</taxon>
    </lineage>
</organism>
<accession>Q92374</accession>
<keyword id="KW-0903">Direct protein sequencing</keyword>
<keyword id="KW-0235">DNA replication</keyword>
<keyword id="KW-0539">Nucleus</keyword>
<keyword id="KW-1185">Reference proteome</keyword>